<dbReference type="EMBL" id="CP000283">
    <property type="protein sequence ID" value="ABE38519.1"/>
    <property type="molecule type" value="Genomic_DNA"/>
</dbReference>
<dbReference type="SMR" id="Q13BM0"/>
<dbReference type="STRING" id="316057.RPD_1281"/>
<dbReference type="KEGG" id="rpd:RPD_1281"/>
<dbReference type="eggNOG" id="COG0322">
    <property type="taxonomic scope" value="Bacteria"/>
</dbReference>
<dbReference type="HOGENOM" id="CLU_014841_3_0_5"/>
<dbReference type="BioCyc" id="RPAL316057:RPD_RS06490-MONOMER"/>
<dbReference type="Proteomes" id="UP000001818">
    <property type="component" value="Chromosome"/>
</dbReference>
<dbReference type="GO" id="GO:0005737">
    <property type="term" value="C:cytoplasm"/>
    <property type="evidence" value="ECO:0007669"/>
    <property type="project" value="UniProtKB-SubCell"/>
</dbReference>
<dbReference type="GO" id="GO:0009380">
    <property type="term" value="C:excinuclease repair complex"/>
    <property type="evidence" value="ECO:0007669"/>
    <property type="project" value="InterPro"/>
</dbReference>
<dbReference type="GO" id="GO:0003677">
    <property type="term" value="F:DNA binding"/>
    <property type="evidence" value="ECO:0007669"/>
    <property type="project" value="UniProtKB-UniRule"/>
</dbReference>
<dbReference type="GO" id="GO:0009381">
    <property type="term" value="F:excinuclease ABC activity"/>
    <property type="evidence" value="ECO:0007669"/>
    <property type="project" value="UniProtKB-UniRule"/>
</dbReference>
<dbReference type="GO" id="GO:0006289">
    <property type="term" value="P:nucleotide-excision repair"/>
    <property type="evidence" value="ECO:0007669"/>
    <property type="project" value="UniProtKB-UniRule"/>
</dbReference>
<dbReference type="GO" id="GO:0009432">
    <property type="term" value="P:SOS response"/>
    <property type="evidence" value="ECO:0007669"/>
    <property type="project" value="UniProtKB-UniRule"/>
</dbReference>
<dbReference type="CDD" id="cd10434">
    <property type="entry name" value="GIY-YIG_UvrC_Cho"/>
    <property type="match status" value="1"/>
</dbReference>
<dbReference type="FunFam" id="3.30.420.340:FF:000001">
    <property type="entry name" value="UvrABC system protein C"/>
    <property type="match status" value="1"/>
</dbReference>
<dbReference type="FunFam" id="3.40.1440.10:FF:000001">
    <property type="entry name" value="UvrABC system protein C"/>
    <property type="match status" value="1"/>
</dbReference>
<dbReference type="Gene3D" id="1.10.150.20">
    <property type="entry name" value="5' to 3' exonuclease, C-terminal subdomain"/>
    <property type="match status" value="1"/>
</dbReference>
<dbReference type="Gene3D" id="3.40.1440.10">
    <property type="entry name" value="GIY-YIG endonuclease"/>
    <property type="match status" value="1"/>
</dbReference>
<dbReference type="Gene3D" id="4.10.860.10">
    <property type="entry name" value="UVR domain"/>
    <property type="match status" value="1"/>
</dbReference>
<dbReference type="Gene3D" id="3.30.420.340">
    <property type="entry name" value="UvrC, RNAse H endonuclease domain"/>
    <property type="match status" value="1"/>
</dbReference>
<dbReference type="HAMAP" id="MF_00203">
    <property type="entry name" value="UvrC"/>
    <property type="match status" value="1"/>
</dbReference>
<dbReference type="InterPro" id="IPR000305">
    <property type="entry name" value="GIY-YIG_endonuc"/>
</dbReference>
<dbReference type="InterPro" id="IPR035901">
    <property type="entry name" value="GIY-YIG_endonuc_sf"/>
</dbReference>
<dbReference type="InterPro" id="IPR047296">
    <property type="entry name" value="GIY-YIG_UvrC_Cho"/>
</dbReference>
<dbReference type="InterPro" id="IPR003583">
    <property type="entry name" value="Hlx-hairpin-Hlx_DNA-bd_motif"/>
</dbReference>
<dbReference type="InterPro" id="IPR010994">
    <property type="entry name" value="RuvA_2-like"/>
</dbReference>
<dbReference type="InterPro" id="IPR001943">
    <property type="entry name" value="UVR_dom"/>
</dbReference>
<dbReference type="InterPro" id="IPR036876">
    <property type="entry name" value="UVR_dom_sf"/>
</dbReference>
<dbReference type="InterPro" id="IPR050066">
    <property type="entry name" value="UvrABC_protein_C"/>
</dbReference>
<dbReference type="InterPro" id="IPR004791">
    <property type="entry name" value="UvrC"/>
</dbReference>
<dbReference type="InterPro" id="IPR001162">
    <property type="entry name" value="UvrC_RNase_H_dom"/>
</dbReference>
<dbReference type="InterPro" id="IPR038476">
    <property type="entry name" value="UvrC_RNase_H_dom_sf"/>
</dbReference>
<dbReference type="NCBIfam" id="NF001824">
    <property type="entry name" value="PRK00558.1-5"/>
    <property type="match status" value="1"/>
</dbReference>
<dbReference type="NCBIfam" id="TIGR00194">
    <property type="entry name" value="uvrC"/>
    <property type="match status" value="1"/>
</dbReference>
<dbReference type="PANTHER" id="PTHR30562:SF1">
    <property type="entry name" value="UVRABC SYSTEM PROTEIN C"/>
    <property type="match status" value="1"/>
</dbReference>
<dbReference type="PANTHER" id="PTHR30562">
    <property type="entry name" value="UVRC/OXIDOREDUCTASE"/>
    <property type="match status" value="1"/>
</dbReference>
<dbReference type="Pfam" id="PF01541">
    <property type="entry name" value="GIY-YIG"/>
    <property type="match status" value="1"/>
</dbReference>
<dbReference type="Pfam" id="PF14520">
    <property type="entry name" value="HHH_5"/>
    <property type="match status" value="1"/>
</dbReference>
<dbReference type="Pfam" id="PF02151">
    <property type="entry name" value="UVR"/>
    <property type="match status" value="1"/>
</dbReference>
<dbReference type="Pfam" id="PF22920">
    <property type="entry name" value="UvrC_RNaseH"/>
    <property type="match status" value="1"/>
</dbReference>
<dbReference type="Pfam" id="PF08459">
    <property type="entry name" value="UvrC_RNaseH_dom"/>
    <property type="match status" value="1"/>
</dbReference>
<dbReference type="SMART" id="SM00465">
    <property type="entry name" value="GIYc"/>
    <property type="match status" value="1"/>
</dbReference>
<dbReference type="SMART" id="SM00278">
    <property type="entry name" value="HhH1"/>
    <property type="match status" value="2"/>
</dbReference>
<dbReference type="SUPFAM" id="SSF46600">
    <property type="entry name" value="C-terminal UvrC-binding domain of UvrB"/>
    <property type="match status" value="1"/>
</dbReference>
<dbReference type="SUPFAM" id="SSF82771">
    <property type="entry name" value="GIY-YIG endonuclease"/>
    <property type="match status" value="1"/>
</dbReference>
<dbReference type="SUPFAM" id="SSF47781">
    <property type="entry name" value="RuvA domain 2-like"/>
    <property type="match status" value="1"/>
</dbReference>
<dbReference type="PROSITE" id="PS50164">
    <property type="entry name" value="GIY_YIG"/>
    <property type="match status" value="1"/>
</dbReference>
<dbReference type="PROSITE" id="PS50151">
    <property type="entry name" value="UVR"/>
    <property type="match status" value="1"/>
</dbReference>
<dbReference type="PROSITE" id="PS50165">
    <property type="entry name" value="UVRC"/>
    <property type="match status" value="1"/>
</dbReference>
<name>UVRC_RHOPS</name>
<evidence type="ECO:0000255" key="1">
    <source>
        <dbReference type="HAMAP-Rule" id="MF_00203"/>
    </source>
</evidence>
<evidence type="ECO:0000256" key="2">
    <source>
        <dbReference type="SAM" id="MobiDB-lite"/>
    </source>
</evidence>
<proteinExistence type="inferred from homology"/>
<organism>
    <name type="scientific">Rhodopseudomonas palustris (strain BisB5)</name>
    <dbReference type="NCBI Taxonomy" id="316057"/>
    <lineage>
        <taxon>Bacteria</taxon>
        <taxon>Pseudomonadati</taxon>
        <taxon>Pseudomonadota</taxon>
        <taxon>Alphaproteobacteria</taxon>
        <taxon>Hyphomicrobiales</taxon>
        <taxon>Nitrobacteraceae</taxon>
        <taxon>Rhodopseudomonas</taxon>
    </lineage>
</organism>
<comment type="function">
    <text evidence="1">The UvrABC repair system catalyzes the recognition and processing of DNA lesions. UvrC both incises the 5' and 3' sides of the lesion. The N-terminal half is responsible for the 3' incision and the C-terminal half is responsible for the 5' incision.</text>
</comment>
<comment type="subunit">
    <text evidence="1">Interacts with UvrB in an incision complex.</text>
</comment>
<comment type="subcellular location">
    <subcellularLocation>
        <location evidence="1">Cytoplasm</location>
    </subcellularLocation>
</comment>
<comment type="similarity">
    <text evidence="1">Belongs to the UvrC family.</text>
</comment>
<keyword id="KW-0963">Cytoplasm</keyword>
<keyword id="KW-0227">DNA damage</keyword>
<keyword id="KW-0228">DNA excision</keyword>
<keyword id="KW-0234">DNA repair</keyword>
<keyword id="KW-0267">Excision nuclease</keyword>
<keyword id="KW-0742">SOS response</keyword>
<sequence>MNQDPAETRDTAAPPPADTTSPSPVSPELEPRSAPGAQDIDAASASLTVDEDDEARLPEIDDDSAEVADGPLAVGRAAIEQAVRLAPTSPGVYRMLNAADDVLYVGKAKNVKKRLSSYARPTGHVVRIARMIAATVTVEIISTATETEALLLEANLIKQLRPRFNVLLRDDKSFPYILITGDHWAPQILKHRGAQSRPGRYFGPFASVGAVNRTITALQRAFLVRSCTDSFFESRTRPCLLYQIRRCAGPCTGEVDFPGYTELVREATDFLSGRSRAVKQELAVEMEKASNELEFETAALYRDRLAALSAIQSQQGINPRTVEEADVFAIHQEGGYSCVEVFFFRTGQNWGNRAYFPRAEKSFTPEEVLASFLAQFYDDKPPPKLILLSHDIEECELLANALCIKAGRKVEVAAPKRGEKKELVAHALTNAREALGRKLADTATQTRLMQGLATTLGLPRPPQRIEVYDNSHIQGTNAVGAMIVAGPDGFIKNQYRKFNIRSEGLTPGDDYAMMREVLQRRFKRLAAAKAEGDAAKPKEDDTPLWPDLVIIDGGRGQLNAARGVLTELGLGAEVTLLGVAKGPDRDAGRETLFMPEREAIKLEPRDPVLYFIQRLRDEAHRFVIGSHRKLRKKDIREAGLQEIPGIGPTRKRALLHHFGTLKEIERASIGDLGKVPGISAESARRIFDFFHPGPG</sequence>
<feature type="chain" id="PRO_0000264938" description="UvrABC system protein C">
    <location>
        <begin position="1"/>
        <end position="695"/>
    </location>
</feature>
<feature type="domain" description="GIY-YIG" evidence="1">
    <location>
        <begin position="88"/>
        <end position="166"/>
    </location>
</feature>
<feature type="domain" description="UVR" evidence="1">
    <location>
        <begin position="276"/>
        <end position="311"/>
    </location>
</feature>
<feature type="region of interest" description="Disordered" evidence="2">
    <location>
        <begin position="1"/>
        <end position="53"/>
    </location>
</feature>
<feature type="compositionally biased region" description="Basic and acidic residues" evidence="2">
    <location>
        <begin position="1"/>
        <end position="10"/>
    </location>
</feature>
<feature type="compositionally biased region" description="Low complexity" evidence="2">
    <location>
        <begin position="18"/>
        <end position="27"/>
    </location>
</feature>
<gene>
    <name evidence="1" type="primary">uvrC</name>
    <name type="ordered locus">RPD_1281</name>
</gene>
<protein>
    <recommendedName>
        <fullName evidence="1">UvrABC system protein C</fullName>
        <shortName evidence="1">Protein UvrC</shortName>
    </recommendedName>
    <alternativeName>
        <fullName evidence="1">Excinuclease ABC subunit C</fullName>
    </alternativeName>
</protein>
<accession>Q13BM0</accession>
<reference key="1">
    <citation type="submission" date="2006-03" db="EMBL/GenBank/DDBJ databases">
        <title>Complete sequence of Rhodopseudomonas palustris BisB5.</title>
        <authorList>
            <consortium name="US DOE Joint Genome Institute"/>
            <person name="Copeland A."/>
            <person name="Lucas S."/>
            <person name="Lapidus A."/>
            <person name="Barry K."/>
            <person name="Detter J.C."/>
            <person name="Glavina del Rio T."/>
            <person name="Hammon N."/>
            <person name="Israni S."/>
            <person name="Dalin E."/>
            <person name="Tice H."/>
            <person name="Pitluck S."/>
            <person name="Chain P."/>
            <person name="Malfatti S."/>
            <person name="Shin M."/>
            <person name="Vergez L."/>
            <person name="Schmutz J."/>
            <person name="Larimer F."/>
            <person name="Land M."/>
            <person name="Hauser L."/>
            <person name="Pelletier D.A."/>
            <person name="Kyrpides N."/>
            <person name="Lykidis A."/>
            <person name="Oda Y."/>
            <person name="Harwood C.S."/>
            <person name="Richardson P."/>
        </authorList>
    </citation>
    <scope>NUCLEOTIDE SEQUENCE [LARGE SCALE GENOMIC DNA]</scope>
    <source>
        <strain>BisB5</strain>
    </source>
</reference>